<proteinExistence type="inferred from homology"/>
<gene>
    <name evidence="1" type="primary">infC</name>
    <name type="ordered locus">RT0518</name>
</gene>
<feature type="chain" id="PRO_0000177569" description="Translation initiation factor IF-3">
    <location>
        <begin position="1"/>
        <end position="185"/>
    </location>
</feature>
<keyword id="KW-0963">Cytoplasm</keyword>
<keyword id="KW-0396">Initiation factor</keyword>
<keyword id="KW-0648">Protein biosynthesis</keyword>
<name>IF3_RICTY</name>
<comment type="function">
    <text evidence="1">IF-3 binds to the 30S ribosomal subunit and shifts the equilibrium between 70S ribosomes and their 50S and 30S subunits in favor of the free subunits, thus enhancing the availability of 30S subunits on which protein synthesis initiation begins.</text>
</comment>
<comment type="subunit">
    <text evidence="1">Monomer.</text>
</comment>
<comment type="subcellular location">
    <subcellularLocation>
        <location evidence="1">Cytoplasm</location>
    </subcellularLocation>
</comment>
<comment type="similarity">
    <text evidence="1">Belongs to the IF-3 family.</text>
</comment>
<sequence>MYLFVNIIWRNFISKNNLPKANREIRAREVRLVDENSEMHGVVNIREALDMAERAGLDLVEISPNAVPPVCKILDFGKFKYENKKRLHEARKKQKIVVLKEMKFKPNISIGDFETKLRKIKEFLKDGDKVKISLWFKGREILHKEVGHELFKRIELALEGLIKIDQHAKMEGKQMIMIISPDIKV</sequence>
<protein>
    <recommendedName>
        <fullName evidence="1">Translation initiation factor IF-3</fullName>
    </recommendedName>
</protein>
<organism>
    <name type="scientific">Rickettsia typhi (strain ATCC VR-144 / Wilmington)</name>
    <dbReference type="NCBI Taxonomy" id="257363"/>
    <lineage>
        <taxon>Bacteria</taxon>
        <taxon>Pseudomonadati</taxon>
        <taxon>Pseudomonadota</taxon>
        <taxon>Alphaproteobacteria</taxon>
        <taxon>Rickettsiales</taxon>
        <taxon>Rickettsiaceae</taxon>
        <taxon>Rickettsieae</taxon>
        <taxon>Rickettsia</taxon>
        <taxon>typhus group</taxon>
    </lineage>
</organism>
<accession>Q68WK5</accession>
<reference key="1">
    <citation type="journal article" date="2004" name="J. Bacteriol.">
        <title>Complete genome sequence of Rickettsia typhi and comparison with sequences of other Rickettsiae.</title>
        <authorList>
            <person name="McLeod M.P."/>
            <person name="Qin X."/>
            <person name="Karpathy S.E."/>
            <person name="Gioia J."/>
            <person name="Highlander S.K."/>
            <person name="Fox G.E."/>
            <person name="McNeill T.Z."/>
            <person name="Jiang H."/>
            <person name="Muzny D."/>
            <person name="Jacob L.S."/>
            <person name="Hawes A.C."/>
            <person name="Sodergren E."/>
            <person name="Gill R."/>
            <person name="Hume J."/>
            <person name="Morgan M."/>
            <person name="Fan G."/>
            <person name="Amin A.G."/>
            <person name="Gibbs R.A."/>
            <person name="Hong C."/>
            <person name="Yu X.-J."/>
            <person name="Walker D.H."/>
            <person name="Weinstock G.M."/>
        </authorList>
    </citation>
    <scope>NUCLEOTIDE SEQUENCE [LARGE SCALE GENOMIC DNA]</scope>
    <source>
        <strain>ATCC VR-144 / Wilmington</strain>
    </source>
</reference>
<evidence type="ECO:0000255" key="1">
    <source>
        <dbReference type="HAMAP-Rule" id="MF_00080"/>
    </source>
</evidence>
<dbReference type="EMBL" id="AE017197">
    <property type="protein sequence ID" value="AAU03987.1"/>
    <property type="molecule type" value="Genomic_DNA"/>
</dbReference>
<dbReference type="RefSeq" id="WP_011190968.1">
    <property type="nucleotide sequence ID" value="NC_006142.1"/>
</dbReference>
<dbReference type="SMR" id="Q68WK5"/>
<dbReference type="KEGG" id="rty:RT0518"/>
<dbReference type="eggNOG" id="COG0290">
    <property type="taxonomic scope" value="Bacteria"/>
</dbReference>
<dbReference type="HOGENOM" id="CLU_054919_3_2_5"/>
<dbReference type="OrthoDB" id="9806014at2"/>
<dbReference type="Proteomes" id="UP000000604">
    <property type="component" value="Chromosome"/>
</dbReference>
<dbReference type="GO" id="GO:0005829">
    <property type="term" value="C:cytosol"/>
    <property type="evidence" value="ECO:0007669"/>
    <property type="project" value="TreeGrafter"/>
</dbReference>
<dbReference type="GO" id="GO:0016020">
    <property type="term" value="C:membrane"/>
    <property type="evidence" value="ECO:0007669"/>
    <property type="project" value="TreeGrafter"/>
</dbReference>
<dbReference type="GO" id="GO:0043022">
    <property type="term" value="F:ribosome binding"/>
    <property type="evidence" value="ECO:0007669"/>
    <property type="project" value="TreeGrafter"/>
</dbReference>
<dbReference type="GO" id="GO:0003743">
    <property type="term" value="F:translation initiation factor activity"/>
    <property type="evidence" value="ECO:0007669"/>
    <property type="project" value="UniProtKB-UniRule"/>
</dbReference>
<dbReference type="GO" id="GO:0032790">
    <property type="term" value="P:ribosome disassembly"/>
    <property type="evidence" value="ECO:0007669"/>
    <property type="project" value="TreeGrafter"/>
</dbReference>
<dbReference type="FunFam" id="3.10.20.80:FF:000001">
    <property type="entry name" value="Translation initiation factor IF-3"/>
    <property type="match status" value="1"/>
</dbReference>
<dbReference type="FunFam" id="3.30.110.10:FF:000001">
    <property type="entry name" value="Translation initiation factor IF-3"/>
    <property type="match status" value="1"/>
</dbReference>
<dbReference type="Gene3D" id="3.30.110.10">
    <property type="entry name" value="Translation initiation factor 3 (IF-3), C-terminal domain"/>
    <property type="match status" value="1"/>
</dbReference>
<dbReference type="Gene3D" id="3.10.20.80">
    <property type="entry name" value="Translation initiation factor 3 (IF-3), N-terminal domain"/>
    <property type="match status" value="1"/>
</dbReference>
<dbReference type="HAMAP" id="MF_00080">
    <property type="entry name" value="IF_3"/>
    <property type="match status" value="1"/>
</dbReference>
<dbReference type="InterPro" id="IPR036788">
    <property type="entry name" value="T_IF-3_C_sf"/>
</dbReference>
<dbReference type="InterPro" id="IPR036787">
    <property type="entry name" value="T_IF-3_N_sf"/>
</dbReference>
<dbReference type="InterPro" id="IPR019813">
    <property type="entry name" value="Translation_initiation_fac3_CS"/>
</dbReference>
<dbReference type="InterPro" id="IPR001288">
    <property type="entry name" value="Translation_initiation_fac_3"/>
</dbReference>
<dbReference type="InterPro" id="IPR019815">
    <property type="entry name" value="Translation_initiation_fac_3_C"/>
</dbReference>
<dbReference type="InterPro" id="IPR019814">
    <property type="entry name" value="Translation_initiation_fac_3_N"/>
</dbReference>
<dbReference type="NCBIfam" id="TIGR00168">
    <property type="entry name" value="infC"/>
    <property type="match status" value="1"/>
</dbReference>
<dbReference type="PANTHER" id="PTHR10938">
    <property type="entry name" value="TRANSLATION INITIATION FACTOR IF-3"/>
    <property type="match status" value="1"/>
</dbReference>
<dbReference type="PANTHER" id="PTHR10938:SF0">
    <property type="entry name" value="TRANSLATION INITIATION FACTOR IF-3, MITOCHONDRIAL"/>
    <property type="match status" value="1"/>
</dbReference>
<dbReference type="Pfam" id="PF00707">
    <property type="entry name" value="IF3_C"/>
    <property type="match status" value="1"/>
</dbReference>
<dbReference type="Pfam" id="PF05198">
    <property type="entry name" value="IF3_N"/>
    <property type="match status" value="1"/>
</dbReference>
<dbReference type="SUPFAM" id="SSF55200">
    <property type="entry name" value="Translation initiation factor IF3, C-terminal domain"/>
    <property type="match status" value="1"/>
</dbReference>
<dbReference type="SUPFAM" id="SSF54364">
    <property type="entry name" value="Translation initiation factor IF3, N-terminal domain"/>
    <property type="match status" value="1"/>
</dbReference>
<dbReference type="PROSITE" id="PS00938">
    <property type="entry name" value="IF3"/>
    <property type="match status" value="1"/>
</dbReference>